<accession>B3DVI3</accession>
<comment type="function">
    <text evidence="5">May function as a protein modifier covalently attached to lysine residues of substrate proteins. This may serve to target the modified proteins for degradation by proteasomes.</text>
</comment>
<comment type="similarity">
    <text evidence="1">Belongs to the ubiquitin-like protein UBact family.</text>
</comment>
<dbReference type="EMBL" id="CP000975">
    <property type="protein sequence ID" value="ACD83336.1"/>
    <property type="molecule type" value="Genomic_DNA"/>
</dbReference>
<dbReference type="SMR" id="B3DVI3"/>
<dbReference type="STRING" id="481448.Minf_1282"/>
<dbReference type="KEGG" id="min:Minf_1282"/>
<dbReference type="eggNOG" id="ENOG5033IZH">
    <property type="taxonomic scope" value="Bacteria"/>
</dbReference>
<dbReference type="HOGENOM" id="CLU_207029_0_0_0"/>
<dbReference type="Proteomes" id="UP000009149">
    <property type="component" value="Chromosome"/>
</dbReference>
<dbReference type="GO" id="GO:0031386">
    <property type="term" value="F:protein tag activity"/>
    <property type="evidence" value="ECO:0007669"/>
    <property type="project" value="UniProtKB-UniRule"/>
</dbReference>
<dbReference type="HAMAP" id="MF_02133">
    <property type="entry name" value="UBact"/>
    <property type="match status" value="1"/>
</dbReference>
<dbReference type="InterPro" id="IPR037543">
    <property type="entry name" value="UBact"/>
</dbReference>
<dbReference type="NCBIfam" id="NF033388">
    <property type="entry name" value="ubiq_like_UBact"/>
    <property type="match status" value="1"/>
</dbReference>
<dbReference type="Pfam" id="PF20513">
    <property type="entry name" value="UBact"/>
    <property type="match status" value="1"/>
</dbReference>
<feature type="chain" id="PRO_0000441766" description="Prokaryotic ubiquitin-like protein UBact">
    <location>
        <begin position="1"/>
        <end position="65"/>
    </location>
</feature>
<feature type="region of interest" description="Disordered" evidence="2">
    <location>
        <begin position="1"/>
        <end position="65"/>
    </location>
</feature>
<feature type="compositionally biased region" description="Polar residues" evidence="2">
    <location>
        <begin position="1"/>
        <end position="17"/>
    </location>
</feature>
<feature type="compositionally biased region" description="Basic and acidic residues" evidence="2">
    <location>
        <begin position="35"/>
        <end position="65"/>
    </location>
</feature>
<feature type="cross-link" description="Isoglutamyl lysine isopeptide (Glu-Lys) (interchain with K-? in acceptor proteins)" evidence="4">
    <location>
        <position position="65"/>
    </location>
</feature>
<sequence>MEVNMPTTEQGQKNKQMIPSPGPGGGSGPGPQAPKVEKPNTEEILKRMRKVDPDQARRYRQRTGE</sequence>
<gene>
    <name evidence="3" type="primary">ubact</name>
    <name evidence="6" type="ordered locus">Minf_1282</name>
</gene>
<organism>
    <name type="scientific">Methylacidiphilum infernorum (isolate V4)</name>
    <name type="common">Methylokorus infernorum (strain V4)</name>
    <dbReference type="NCBI Taxonomy" id="481448"/>
    <lineage>
        <taxon>Bacteria</taxon>
        <taxon>Pseudomonadati</taxon>
        <taxon>Verrucomicrobiota</taxon>
        <taxon>Methylacidiphilae</taxon>
        <taxon>Methylacidiphilales</taxon>
        <taxon>Methylacidiphilaceae</taxon>
        <taxon>Methylacidiphilum (ex Ratnadevi et al. 2023)</taxon>
    </lineage>
</organism>
<protein>
    <recommendedName>
        <fullName evidence="3">Prokaryotic ubiquitin-like protein UBact</fullName>
    </recommendedName>
</protein>
<name>UBACT_METI4</name>
<keyword id="KW-1017">Isopeptide bond</keyword>
<keyword id="KW-0833">Ubl conjugation pathway</keyword>
<evidence type="ECO:0000255" key="1">
    <source>
        <dbReference type="HAMAP-Rule" id="MF_02133"/>
    </source>
</evidence>
<evidence type="ECO:0000256" key="2">
    <source>
        <dbReference type="SAM" id="MobiDB-lite"/>
    </source>
</evidence>
<evidence type="ECO:0000303" key="3">
    <source>
    </source>
</evidence>
<evidence type="ECO:0000305" key="4"/>
<evidence type="ECO:0000305" key="5">
    <source>
    </source>
</evidence>
<evidence type="ECO:0000312" key="6">
    <source>
        <dbReference type="EMBL" id="ACD83336.1"/>
    </source>
</evidence>
<proteinExistence type="inferred from homology"/>
<reference key="1">
    <citation type="journal article" date="2008" name="Biol. Direct">
        <title>Complete genome sequence of the extremely acidophilic methanotroph isolate V4, Methylacidiphilum infernorum, a representative of the bacterial phylum Verrucomicrobia.</title>
        <authorList>
            <person name="Hou S."/>
            <person name="Makarova K.S."/>
            <person name="Saw J.H."/>
            <person name="Senin P."/>
            <person name="Ly B.V."/>
            <person name="Zhou Z."/>
            <person name="Ren Y."/>
            <person name="Wang J."/>
            <person name="Galperin M.Y."/>
            <person name="Omelchenko M.V."/>
            <person name="Wolf Y.I."/>
            <person name="Yutin N."/>
            <person name="Koonin E.V."/>
            <person name="Stott M.B."/>
            <person name="Mountain B.W."/>
            <person name="Crowe M.A."/>
            <person name="Smirnova A.V."/>
            <person name="Dunfield P.F."/>
            <person name="Feng L."/>
            <person name="Wang L."/>
            <person name="Alam M."/>
        </authorList>
    </citation>
    <scope>NUCLEOTIDE SEQUENCE [LARGE SCALE GENOMIC DNA]</scope>
    <source>
        <strain>Isolate V4</strain>
    </source>
</reference>
<reference key="2">
    <citation type="journal article" date="2017" name="Biochem. Biophys. Res. Commun.">
        <title>Identification of UBact, a ubiquitin-like protein, along with other homologous components of a conjugation system and the proteasome in different gram-negative bacteria.</title>
        <authorList>
            <person name="Lehmann G."/>
            <person name="Udasin R.G."/>
            <person name="Livneh I."/>
            <person name="Ciechanover A."/>
        </authorList>
    </citation>
    <scope>PREDICTED FUNCTION</scope>
    <source>
        <strain>Isolate V4</strain>
    </source>
</reference>